<comment type="function">
    <text evidence="1">Prenyltransferase that catalyzes the transfer of the geranylgeranyl moiety of geranylgeranyl diphosphate (GGPP) to the C2 hydroxyl of (S)-3-O-geranylgeranylglyceryl phosphate (GGGP). This reaction is the second ether-bond-formation step in the biosynthesis of archaeal membrane lipids.</text>
</comment>
<comment type="catalytic activity">
    <reaction evidence="1">
        <text>sn-3-O-(geranylgeranyl)glycerol 1-phosphate + (2E,6E,10E)-geranylgeranyl diphosphate = 2,3-bis-O-(geranylgeranyl)-sn-glycerol 1-phosphate + diphosphate</text>
        <dbReference type="Rhea" id="RHEA:18109"/>
        <dbReference type="ChEBI" id="CHEBI:33019"/>
        <dbReference type="ChEBI" id="CHEBI:57677"/>
        <dbReference type="ChEBI" id="CHEBI:58756"/>
        <dbReference type="ChEBI" id="CHEBI:58837"/>
        <dbReference type="EC" id="2.5.1.42"/>
    </reaction>
</comment>
<comment type="cofactor">
    <cofactor evidence="1">
        <name>Mg(2+)</name>
        <dbReference type="ChEBI" id="CHEBI:18420"/>
    </cofactor>
</comment>
<comment type="pathway">
    <text evidence="1">Membrane lipid metabolism; glycerophospholipid metabolism.</text>
</comment>
<comment type="subcellular location">
    <subcellularLocation>
        <location evidence="1">Cell membrane</location>
        <topology evidence="1">Multi-pass membrane protein</topology>
    </subcellularLocation>
</comment>
<comment type="similarity">
    <text evidence="1">Belongs to the UbiA prenyltransferase family. DGGGP synthase subfamily.</text>
</comment>
<evidence type="ECO:0000255" key="1">
    <source>
        <dbReference type="HAMAP-Rule" id="MF_01286"/>
    </source>
</evidence>
<feature type="chain" id="PRO_0000350718" description="Digeranylgeranylglyceryl phosphate synthase">
    <location>
        <begin position="1"/>
        <end position="277"/>
    </location>
</feature>
<feature type="transmembrane region" description="Helical" evidence="1">
    <location>
        <begin position="16"/>
        <end position="36"/>
    </location>
</feature>
<feature type="transmembrane region" description="Helical" evidence="1">
    <location>
        <begin position="40"/>
        <end position="60"/>
    </location>
</feature>
<feature type="transmembrane region" description="Helical" evidence="1">
    <location>
        <begin position="83"/>
        <end position="105"/>
    </location>
</feature>
<feature type="transmembrane region" description="Helical" evidence="1">
    <location>
        <begin position="107"/>
        <end position="124"/>
    </location>
</feature>
<feature type="transmembrane region" description="Helical" evidence="1">
    <location>
        <begin position="146"/>
        <end position="166"/>
    </location>
</feature>
<feature type="transmembrane region" description="Helical" evidence="1">
    <location>
        <begin position="202"/>
        <end position="222"/>
    </location>
</feature>
<feature type="transmembrane region" description="Helical" evidence="1">
    <location>
        <begin position="224"/>
        <end position="244"/>
    </location>
</feature>
<feature type="transmembrane region" description="Helical" evidence="1">
    <location>
        <begin position="256"/>
        <end position="276"/>
    </location>
</feature>
<dbReference type="EC" id="2.5.1.42" evidence="1"/>
<dbReference type="EMBL" id="AP006878">
    <property type="protein sequence ID" value="BAD86146.1"/>
    <property type="molecule type" value="Genomic_DNA"/>
</dbReference>
<dbReference type="RefSeq" id="WP_011250907.1">
    <property type="nucleotide sequence ID" value="NC_006624.1"/>
</dbReference>
<dbReference type="SMR" id="Q5JDN5"/>
<dbReference type="FunCoup" id="Q5JDN5">
    <property type="interactions" value="77"/>
</dbReference>
<dbReference type="STRING" id="69014.TK1957"/>
<dbReference type="EnsemblBacteria" id="BAD86146">
    <property type="protein sequence ID" value="BAD86146"/>
    <property type="gene ID" value="TK1957"/>
</dbReference>
<dbReference type="GeneID" id="78448488"/>
<dbReference type="KEGG" id="tko:TK1957"/>
<dbReference type="PATRIC" id="fig|69014.16.peg.1911"/>
<dbReference type="eggNOG" id="arCOG00476">
    <property type="taxonomic scope" value="Archaea"/>
</dbReference>
<dbReference type="HOGENOM" id="CLU_073311_1_1_2"/>
<dbReference type="InParanoid" id="Q5JDN5"/>
<dbReference type="OrthoDB" id="11851at2157"/>
<dbReference type="PhylomeDB" id="Q5JDN5"/>
<dbReference type="UniPathway" id="UPA00940"/>
<dbReference type="Proteomes" id="UP000000536">
    <property type="component" value="Chromosome"/>
</dbReference>
<dbReference type="GO" id="GO:0005886">
    <property type="term" value="C:plasma membrane"/>
    <property type="evidence" value="ECO:0007669"/>
    <property type="project" value="UniProtKB-SubCell"/>
</dbReference>
<dbReference type="GO" id="GO:0047295">
    <property type="term" value="F:geranylgeranylglycerol-phosphate geranylgeranyltransferase activity"/>
    <property type="evidence" value="ECO:0007669"/>
    <property type="project" value="UniProtKB-UniRule"/>
</dbReference>
<dbReference type="GO" id="GO:0000287">
    <property type="term" value="F:magnesium ion binding"/>
    <property type="evidence" value="ECO:0007669"/>
    <property type="project" value="UniProtKB-UniRule"/>
</dbReference>
<dbReference type="GO" id="GO:0046474">
    <property type="term" value="P:glycerophospholipid biosynthetic process"/>
    <property type="evidence" value="ECO:0007669"/>
    <property type="project" value="UniProtKB-UniRule"/>
</dbReference>
<dbReference type="CDD" id="cd13961">
    <property type="entry name" value="PT_UbiA_DGGGPS"/>
    <property type="match status" value="1"/>
</dbReference>
<dbReference type="Gene3D" id="1.10.357.140">
    <property type="entry name" value="UbiA prenyltransferase"/>
    <property type="match status" value="1"/>
</dbReference>
<dbReference type="Gene3D" id="1.20.120.1780">
    <property type="entry name" value="UbiA prenyltransferase"/>
    <property type="match status" value="1"/>
</dbReference>
<dbReference type="HAMAP" id="MF_01286">
    <property type="entry name" value="DGGGP_synth"/>
    <property type="match status" value="1"/>
</dbReference>
<dbReference type="InterPro" id="IPR023547">
    <property type="entry name" value="DGGGP_synth"/>
</dbReference>
<dbReference type="InterPro" id="IPR050475">
    <property type="entry name" value="Prenyltransferase_related"/>
</dbReference>
<dbReference type="InterPro" id="IPR000537">
    <property type="entry name" value="UbiA_prenyltransferase"/>
</dbReference>
<dbReference type="InterPro" id="IPR044878">
    <property type="entry name" value="UbiA_sf"/>
</dbReference>
<dbReference type="NCBIfam" id="NF009522">
    <property type="entry name" value="PRK12883.1"/>
    <property type="match status" value="1"/>
</dbReference>
<dbReference type="NCBIfam" id="NF009523">
    <property type="entry name" value="PRK12884.1"/>
    <property type="match status" value="1"/>
</dbReference>
<dbReference type="PANTHER" id="PTHR42723">
    <property type="entry name" value="CHLOROPHYLL SYNTHASE"/>
    <property type="match status" value="1"/>
</dbReference>
<dbReference type="PANTHER" id="PTHR42723:SF1">
    <property type="entry name" value="CHLOROPHYLL SYNTHASE, CHLOROPLASTIC"/>
    <property type="match status" value="1"/>
</dbReference>
<dbReference type="Pfam" id="PF01040">
    <property type="entry name" value="UbiA"/>
    <property type="match status" value="1"/>
</dbReference>
<organism>
    <name type="scientific">Thermococcus kodakarensis (strain ATCC BAA-918 / JCM 12380 / KOD1)</name>
    <name type="common">Pyrococcus kodakaraensis (strain KOD1)</name>
    <dbReference type="NCBI Taxonomy" id="69014"/>
    <lineage>
        <taxon>Archaea</taxon>
        <taxon>Methanobacteriati</taxon>
        <taxon>Methanobacteriota</taxon>
        <taxon>Thermococci</taxon>
        <taxon>Thermococcales</taxon>
        <taxon>Thermococcaceae</taxon>
        <taxon>Thermococcus</taxon>
    </lineage>
</organism>
<protein>
    <recommendedName>
        <fullName evidence="1">Digeranylgeranylglyceryl phosphate synthase</fullName>
        <shortName evidence="1">DGGGP synthase</shortName>
        <shortName evidence="1">DGGGPS</shortName>
        <ecNumber evidence="1">2.5.1.42</ecNumber>
    </recommendedName>
    <alternativeName>
        <fullName evidence="1">(S)-2,3-di-O-geranylgeranylglyceryl phosphate synthase</fullName>
    </alternativeName>
    <alternativeName>
        <fullName evidence="1">Geranylgeranylglycerol-phosphate geranylgeranyltransferase</fullName>
    </alternativeName>
</protein>
<sequence length="277" mass="29832">MEFKAFIEITRPHNCLLAGIVGVLGSIVAAGGLPELKTAILVFLVVFLGCAGGNTINDYFDYEIDKINRPERPLPRGAMSRKAALWYSVALFATGIVLAWFINIWDFLLAIVAYVTMFIYAWKLKPMPFIGNVVVASLTGATPLYGAIAVGEIGLAGTLALCAFLVNVAREVIKDIEDIEGDMAKGAKTLPILIGRKRAAYVGALFAILTVVASFLPIKAGIGLGYLAMLPVDAVILYSAFLILRSQDRETAHRAQILLKVSVFLAVVAFLIASLVR</sequence>
<gene>
    <name type="ordered locus">TK1957</name>
</gene>
<accession>Q5JDN5</accession>
<name>DGGGP_THEKO</name>
<proteinExistence type="inferred from homology"/>
<keyword id="KW-1003">Cell membrane</keyword>
<keyword id="KW-0444">Lipid biosynthesis</keyword>
<keyword id="KW-0443">Lipid metabolism</keyword>
<keyword id="KW-0460">Magnesium</keyword>
<keyword id="KW-0472">Membrane</keyword>
<keyword id="KW-0594">Phospholipid biosynthesis</keyword>
<keyword id="KW-1208">Phospholipid metabolism</keyword>
<keyword id="KW-1185">Reference proteome</keyword>
<keyword id="KW-0808">Transferase</keyword>
<keyword id="KW-0812">Transmembrane</keyword>
<keyword id="KW-1133">Transmembrane helix</keyword>
<reference key="1">
    <citation type="journal article" date="2005" name="Genome Res.">
        <title>Complete genome sequence of the hyperthermophilic archaeon Thermococcus kodakaraensis KOD1 and comparison with Pyrococcus genomes.</title>
        <authorList>
            <person name="Fukui T."/>
            <person name="Atomi H."/>
            <person name="Kanai T."/>
            <person name="Matsumi R."/>
            <person name="Fujiwara S."/>
            <person name="Imanaka T."/>
        </authorList>
    </citation>
    <scope>NUCLEOTIDE SEQUENCE [LARGE SCALE GENOMIC DNA]</scope>
    <source>
        <strain>ATCC BAA-918 / JCM 12380 / KOD1</strain>
    </source>
</reference>